<evidence type="ECO:0000255" key="1">
    <source>
        <dbReference type="HAMAP-Rule" id="MF_00251"/>
    </source>
</evidence>
<evidence type="ECO:0000305" key="2"/>
<feature type="chain" id="PRO_0000344667" description="Large ribosomal subunit protein bL36B">
    <location>
        <begin position="1"/>
        <end position="46"/>
    </location>
</feature>
<proteinExistence type="inferred from homology"/>
<reference key="1">
    <citation type="journal article" date="2010" name="PLoS Genet.">
        <title>Genome sequence of the plant growth promoting endophytic bacterium Enterobacter sp. 638.</title>
        <authorList>
            <person name="Taghavi S."/>
            <person name="van der Lelie D."/>
            <person name="Hoffman A."/>
            <person name="Zhang Y.B."/>
            <person name="Walla M.D."/>
            <person name="Vangronsveld J."/>
            <person name="Newman L."/>
            <person name="Monchy S."/>
        </authorList>
    </citation>
    <scope>NUCLEOTIDE SEQUENCE [LARGE SCALE GENOMIC DNA]</scope>
    <source>
        <strain>638</strain>
    </source>
</reference>
<gene>
    <name evidence="1" type="primary">rpmJ2</name>
    <name type="ordered locus">Ent638_0935</name>
</gene>
<protein>
    <recommendedName>
        <fullName evidence="1">Large ribosomal subunit protein bL36B</fullName>
    </recommendedName>
    <alternativeName>
        <fullName evidence="2">50S ribosomal protein L36 2</fullName>
    </alternativeName>
</protein>
<dbReference type="EMBL" id="CP000653">
    <property type="protein sequence ID" value="ABP59619.1"/>
    <property type="molecule type" value="Genomic_DNA"/>
</dbReference>
<dbReference type="SMR" id="A4W7D9"/>
<dbReference type="STRING" id="399742.Ent638_0935"/>
<dbReference type="KEGG" id="ent:Ent638_0935"/>
<dbReference type="eggNOG" id="COG0257">
    <property type="taxonomic scope" value="Bacteria"/>
</dbReference>
<dbReference type="HOGENOM" id="CLU_135723_3_1_6"/>
<dbReference type="OrthoDB" id="9801558at2"/>
<dbReference type="Proteomes" id="UP000000230">
    <property type="component" value="Chromosome"/>
</dbReference>
<dbReference type="GO" id="GO:1990904">
    <property type="term" value="C:ribonucleoprotein complex"/>
    <property type="evidence" value="ECO:0007669"/>
    <property type="project" value="UniProtKB-KW"/>
</dbReference>
<dbReference type="GO" id="GO:0005840">
    <property type="term" value="C:ribosome"/>
    <property type="evidence" value="ECO:0007669"/>
    <property type="project" value="UniProtKB-KW"/>
</dbReference>
<dbReference type="GO" id="GO:0003735">
    <property type="term" value="F:structural constituent of ribosome"/>
    <property type="evidence" value="ECO:0007669"/>
    <property type="project" value="InterPro"/>
</dbReference>
<dbReference type="GO" id="GO:0006412">
    <property type="term" value="P:translation"/>
    <property type="evidence" value="ECO:0007669"/>
    <property type="project" value="UniProtKB-UniRule"/>
</dbReference>
<dbReference type="HAMAP" id="MF_00251">
    <property type="entry name" value="Ribosomal_bL36"/>
    <property type="match status" value="1"/>
</dbReference>
<dbReference type="InterPro" id="IPR000473">
    <property type="entry name" value="Ribosomal_bL36"/>
</dbReference>
<dbReference type="InterPro" id="IPR035977">
    <property type="entry name" value="Ribosomal_bL36_sp"/>
</dbReference>
<dbReference type="InterPro" id="IPR047621">
    <property type="entry name" value="Ribosomal_L36_bact"/>
</dbReference>
<dbReference type="NCBIfam" id="NF002021">
    <property type="entry name" value="PRK00831.1"/>
    <property type="match status" value="1"/>
</dbReference>
<dbReference type="NCBIfam" id="TIGR01022">
    <property type="entry name" value="rpmJ_bact"/>
    <property type="match status" value="1"/>
</dbReference>
<dbReference type="PANTHER" id="PTHR47781">
    <property type="entry name" value="50S RIBOSOMAL PROTEIN L36 2"/>
    <property type="match status" value="1"/>
</dbReference>
<dbReference type="PANTHER" id="PTHR47781:SF1">
    <property type="entry name" value="LARGE RIBOSOMAL SUBUNIT PROTEIN BL36B"/>
    <property type="match status" value="1"/>
</dbReference>
<dbReference type="Pfam" id="PF00444">
    <property type="entry name" value="Ribosomal_L36"/>
    <property type="match status" value="1"/>
</dbReference>
<dbReference type="SUPFAM" id="SSF57840">
    <property type="entry name" value="Ribosomal protein L36"/>
    <property type="match status" value="1"/>
</dbReference>
<dbReference type="PROSITE" id="PS00828">
    <property type="entry name" value="RIBOSOMAL_L36"/>
    <property type="match status" value="1"/>
</dbReference>
<keyword id="KW-0687">Ribonucleoprotein</keyword>
<keyword id="KW-0689">Ribosomal protein</keyword>
<name>RL362_ENT38</name>
<organism>
    <name type="scientific">Enterobacter sp. (strain 638)</name>
    <dbReference type="NCBI Taxonomy" id="399742"/>
    <lineage>
        <taxon>Bacteria</taxon>
        <taxon>Pseudomonadati</taxon>
        <taxon>Pseudomonadota</taxon>
        <taxon>Gammaproteobacteria</taxon>
        <taxon>Enterobacterales</taxon>
        <taxon>Enterobacteriaceae</taxon>
        <taxon>Enterobacter</taxon>
    </lineage>
</organism>
<sequence length="46" mass="5480">MQVLNSLRSAKQRHPDCQIVKRKGRLYVICKSNPRFKAVQGRKKRR</sequence>
<accession>A4W7D9</accession>
<comment type="similarity">
    <text evidence="1">Belongs to the bacterial ribosomal protein bL36 family.</text>
</comment>